<dbReference type="EMBL" id="U69161">
    <property type="protein sequence ID" value="AAB84360.1"/>
    <property type="molecule type" value="mRNA"/>
</dbReference>
<dbReference type="EMBL" id="AF039103">
    <property type="protein sequence ID" value="AAC39694.1"/>
    <property type="molecule type" value="mRNA"/>
</dbReference>
<dbReference type="EMBL" id="AF092095">
    <property type="protein sequence ID" value="AAC78331.1"/>
    <property type="molecule type" value="mRNA"/>
</dbReference>
<dbReference type="EMBL" id="AK292092">
    <property type="protein sequence ID" value="BAF84781.1"/>
    <property type="molecule type" value="mRNA"/>
</dbReference>
<dbReference type="EMBL" id="CR456821">
    <property type="protein sequence ID" value="CAG33102.1"/>
    <property type="molecule type" value="mRNA"/>
</dbReference>
<dbReference type="EMBL" id="AK223010">
    <property type="protein sequence ID" value="BAD96730.1"/>
    <property type="molecule type" value="mRNA"/>
</dbReference>
<dbReference type="EMBL" id="AK222969">
    <property type="protein sequence ID" value="BAD96689.1"/>
    <property type="molecule type" value="mRNA"/>
</dbReference>
<dbReference type="EMBL" id="AC025972">
    <property type="status" value="NOT_ANNOTATED_CDS"/>
    <property type="molecule type" value="Genomic_DNA"/>
</dbReference>
<dbReference type="EMBL" id="CH471064">
    <property type="protein sequence ID" value="EAW68338.1"/>
    <property type="molecule type" value="Genomic_DNA"/>
</dbReference>
<dbReference type="EMBL" id="CH471064">
    <property type="protein sequence ID" value="EAW68339.1"/>
    <property type="molecule type" value="Genomic_DNA"/>
</dbReference>
<dbReference type="EMBL" id="BC002439">
    <property type="protein sequence ID" value="AAH02439.2"/>
    <property type="molecule type" value="mRNA"/>
</dbReference>
<dbReference type="EMBL" id="BC015358">
    <property type="protein sequence ID" value="AAH15358.1"/>
    <property type="molecule type" value="mRNA"/>
</dbReference>
<dbReference type="CCDS" id="CCDS44553.1">
    <molecule id="Q9BUP3-3"/>
</dbReference>
<dbReference type="CCDS" id="CCDS53613.1">
    <molecule id="Q9BUP3-2"/>
</dbReference>
<dbReference type="CCDS" id="CCDS7852.1">
    <molecule id="Q9BUP3-1"/>
</dbReference>
<dbReference type="RefSeq" id="NP_001091990.1">
    <molecule id="Q9BUP3-3"/>
    <property type="nucleotide sequence ID" value="NM_001098520.2"/>
</dbReference>
<dbReference type="RefSeq" id="NP_001091991.1">
    <molecule id="Q9BUP3-1"/>
    <property type="nucleotide sequence ID" value="NM_001098521.2"/>
</dbReference>
<dbReference type="RefSeq" id="NP_001091992.1">
    <molecule id="Q9BUP3-1"/>
    <property type="nucleotide sequence ID" value="NM_001098522.2"/>
</dbReference>
<dbReference type="RefSeq" id="NP_001091993.1">
    <molecule id="Q9BUP3-2"/>
    <property type="nucleotide sequence ID" value="NM_001098523.2"/>
</dbReference>
<dbReference type="RefSeq" id="NP_006401.3">
    <molecule id="Q9BUP3-1"/>
    <property type="nucleotide sequence ID" value="NM_006410.4"/>
</dbReference>
<dbReference type="PDB" id="2BKA">
    <property type="method" value="X-ray"/>
    <property type="resolution" value="1.70 A"/>
    <property type="chains" value="A=1-242"/>
</dbReference>
<dbReference type="PDBsum" id="2BKA"/>
<dbReference type="SMR" id="Q9BUP3"/>
<dbReference type="BioGRID" id="115804">
    <property type="interactions" value="64"/>
</dbReference>
<dbReference type="FunCoup" id="Q9BUP3">
    <property type="interactions" value="1251"/>
</dbReference>
<dbReference type="IntAct" id="Q9BUP3">
    <property type="interactions" value="31"/>
</dbReference>
<dbReference type="MINT" id="Q9BUP3"/>
<dbReference type="STRING" id="9606.ENSP00000392985"/>
<dbReference type="DrugBank" id="DB11077">
    <property type="generic name" value="Polyethylene glycol 400"/>
</dbReference>
<dbReference type="GlyGen" id="Q9BUP3">
    <property type="glycosylation" value="2 sites, 1 N-linked glycan (1 site), 1 O-linked glycan (1 site)"/>
</dbReference>
<dbReference type="iPTMnet" id="Q9BUP3"/>
<dbReference type="PhosphoSitePlus" id="Q9BUP3"/>
<dbReference type="SwissPalm" id="Q9BUP3"/>
<dbReference type="BioMuta" id="HTATIP2"/>
<dbReference type="DMDM" id="317373366"/>
<dbReference type="jPOST" id="Q9BUP3"/>
<dbReference type="MassIVE" id="Q9BUP3"/>
<dbReference type="PaxDb" id="9606-ENSP00000392985"/>
<dbReference type="PeptideAtlas" id="Q9BUP3"/>
<dbReference type="ProteomicsDB" id="79117">
    <molecule id="Q9BUP3-1"/>
</dbReference>
<dbReference type="ProteomicsDB" id="79118">
    <molecule id="Q9BUP3-2"/>
</dbReference>
<dbReference type="ProteomicsDB" id="79119">
    <molecule id="Q9BUP3-3"/>
</dbReference>
<dbReference type="Pumba" id="Q9BUP3"/>
<dbReference type="Antibodypedia" id="1770">
    <property type="antibodies" value="279 antibodies from 32 providers"/>
</dbReference>
<dbReference type="DNASU" id="10553"/>
<dbReference type="Ensembl" id="ENST00000419348.6">
    <molecule id="Q9BUP3-3"/>
    <property type="protein sequence ID" value="ENSP00000392985.2"/>
    <property type="gene ID" value="ENSG00000109854.14"/>
</dbReference>
<dbReference type="Ensembl" id="ENST00000421577.6">
    <molecule id="Q9BUP3-1"/>
    <property type="protein sequence ID" value="ENSP00000397752.2"/>
    <property type="gene ID" value="ENSG00000109854.14"/>
</dbReference>
<dbReference type="Ensembl" id="ENST00000443524.6">
    <molecule id="Q9BUP3-1"/>
    <property type="protein sequence ID" value="ENSP00000387876.2"/>
    <property type="gene ID" value="ENSG00000109854.14"/>
</dbReference>
<dbReference type="Ensembl" id="ENST00000451739.7">
    <molecule id="Q9BUP3-1"/>
    <property type="protein sequence ID" value="ENSP00000394259.2"/>
    <property type="gene ID" value="ENSG00000109854.14"/>
</dbReference>
<dbReference type="Ensembl" id="ENST00000530266.5">
    <molecule id="Q9BUP3-2"/>
    <property type="protein sequence ID" value="ENSP00000436548.1"/>
    <property type="gene ID" value="ENSG00000109854.14"/>
</dbReference>
<dbReference type="Ensembl" id="ENST00000532081.1">
    <molecule id="Q9BUP3-2"/>
    <property type="protein sequence ID" value="ENSP00000432107.1"/>
    <property type="gene ID" value="ENSG00000109854.14"/>
</dbReference>
<dbReference type="Ensembl" id="ENST00000532505.1">
    <molecule id="Q9BUP3-2"/>
    <property type="protein sequence ID" value="ENSP00000432338.1"/>
    <property type="gene ID" value="ENSG00000109854.14"/>
</dbReference>
<dbReference type="GeneID" id="10553"/>
<dbReference type="KEGG" id="hsa:10553"/>
<dbReference type="MANE-Select" id="ENST00000451739.7">
    <property type="protein sequence ID" value="ENSP00000394259.2"/>
    <property type="RefSeq nucleotide sequence ID" value="NM_001098522.2"/>
    <property type="RefSeq protein sequence ID" value="NP_001091992.1"/>
</dbReference>
<dbReference type="UCSC" id="uc001mpx.3">
    <molecule id="Q9BUP3-1"/>
    <property type="organism name" value="human"/>
</dbReference>
<dbReference type="AGR" id="HGNC:16637"/>
<dbReference type="CTD" id="10553"/>
<dbReference type="DisGeNET" id="10553"/>
<dbReference type="GeneCards" id="HTATIP2"/>
<dbReference type="HGNC" id="HGNC:16637">
    <property type="gene designation" value="HTATIP2"/>
</dbReference>
<dbReference type="HPA" id="ENSG00000109854">
    <property type="expression patterns" value="Low tissue specificity"/>
</dbReference>
<dbReference type="MIM" id="605628">
    <property type="type" value="gene"/>
</dbReference>
<dbReference type="neXtProt" id="NX_Q9BUP3"/>
<dbReference type="OpenTargets" id="ENSG00000109854"/>
<dbReference type="PharmGKB" id="PA29539"/>
<dbReference type="VEuPathDB" id="HostDB:ENSG00000109854"/>
<dbReference type="eggNOG" id="KOG4039">
    <property type="taxonomic scope" value="Eukaryota"/>
</dbReference>
<dbReference type="GeneTree" id="ENSGT00390000008184"/>
<dbReference type="HOGENOM" id="CLU_1906034_0_0_1"/>
<dbReference type="InParanoid" id="Q9BUP3"/>
<dbReference type="OMA" id="DWPQLTI"/>
<dbReference type="OrthoDB" id="430436at2759"/>
<dbReference type="PAN-GO" id="Q9BUP3">
    <property type="GO annotations" value="2 GO annotations based on evolutionary models"/>
</dbReference>
<dbReference type="PhylomeDB" id="Q9BUP3"/>
<dbReference type="TreeFam" id="TF312849"/>
<dbReference type="PathwayCommons" id="Q9BUP3"/>
<dbReference type="SignaLink" id="Q9BUP3"/>
<dbReference type="BioGRID-ORCS" id="10553">
    <property type="hits" value="18 hits in 1169 CRISPR screens"/>
</dbReference>
<dbReference type="ChiTaRS" id="HTATIP2">
    <property type="organism name" value="human"/>
</dbReference>
<dbReference type="EvolutionaryTrace" id="Q9BUP3"/>
<dbReference type="GeneWiki" id="HTATIP2"/>
<dbReference type="GenomeRNAi" id="10553"/>
<dbReference type="Pharos" id="Q9BUP3">
    <property type="development level" value="Tbio"/>
</dbReference>
<dbReference type="PRO" id="PR:Q9BUP3"/>
<dbReference type="Proteomes" id="UP000005640">
    <property type="component" value="Chromosome 11"/>
</dbReference>
<dbReference type="RNAct" id="Q9BUP3">
    <property type="molecule type" value="protein"/>
</dbReference>
<dbReference type="Bgee" id="ENSG00000109854">
    <property type="expression patterns" value="Expressed in jejunal mucosa and 209 other cell types or tissues"/>
</dbReference>
<dbReference type="ExpressionAtlas" id="Q9BUP3">
    <property type="expression patterns" value="baseline and differential"/>
</dbReference>
<dbReference type="GO" id="GO:0005737">
    <property type="term" value="C:cytoplasm"/>
    <property type="evidence" value="ECO:0000314"/>
    <property type="project" value="UniProtKB"/>
</dbReference>
<dbReference type="GO" id="GO:0005829">
    <property type="term" value="C:cytosol"/>
    <property type="evidence" value="ECO:0000314"/>
    <property type="project" value="HPA"/>
</dbReference>
<dbReference type="GO" id="GO:0005739">
    <property type="term" value="C:mitochondrion"/>
    <property type="evidence" value="ECO:0006056"/>
    <property type="project" value="FlyBase"/>
</dbReference>
<dbReference type="GO" id="GO:0005635">
    <property type="term" value="C:nuclear envelope"/>
    <property type="evidence" value="ECO:0007669"/>
    <property type="project" value="UniProtKB-SubCell"/>
</dbReference>
<dbReference type="GO" id="GO:0016491">
    <property type="term" value="F:oxidoreductase activity"/>
    <property type="evidence" value="ECO:0007669"/>
    <property type="project" value="UniProtKB-KW"/>
</dbReference>
<dbReference type="GO" id="GO:0004674">
    <property type="term" value="F:protein serine/threonine kinase activity"/>
    <property type="evidence" value="ECO:0000314"/>
    <property type="project" value="MGI"/>
</dbReference>
<dbReference type="GO" id="GO:0001525">
    <property type="term" value="P:angiogenesis"/>
    <property type="evidence" value="ECO:0007669"/>
    <property type="project" value="UniProtKB-KW"/>
</dbReference>
<dbReference type="GO" id="GO:0006915">
    <property type="term" value="P:apoptotic process"/>
    <property type="evidence" value="ECO:0007669"/>
    <property type="project" value="UniProtKB-KW"/>
</dbReference>
<dbReference type="GO" id="GO:0030154">
    <property type="term" value="P:cell differentiation"/>
    <property type="evidence" value="ECO:0007669"/>
    <property type="project" value="UniProtKB-KW"/>
</dbReference>
<dbReference type="GO" id="GO:0051170">
    <property type="term" value="P:import into nucleus"/>
    <property type="evidence" value="ECO:0000318"/>
    <property type="project" value="GO_Central"/>
</dbReference>
<dbReference type="GO" id="GO:0043068">
    <property type="term" value="P:positive regulation of programmed cell death"/>
    <property type="evidence" value="ECO:0000314"/>
    <property type="project" value="MGI"/>
</dbReference>
<dbReference type="GO" id="GO:0045944">
    <property type="term" value="P:positive regulation of transcription by RNA polymerase II"/>
    <property type="evidence" value="ECO:0000314"/>
    <property type="project" value="MGI"/>
</dbReference>
<dbReference type="GO" id="GO:0046777">
    <property type="term" value="P:protein autophosphorylation"/>
    <property type="evidence" value="ECO:0000314"/>
    <property type="project" value="MGI"/>
</dbReference>
<dbReference type="CDD" id="cd05250">
    <property type="entry name" value="CC3_like_SDR_a"/>
    <property type="match status" value="1"/>
</dbReference>
<dbReference type="FunFam" id="3.40.50.720:FF:000271">
    <property type="entry name" value="oxidoreductase HTATIP2 isoform X1"/>
    <property type="match status" value="1"/>
</dbReference>
<dbReference type="Gene3D" id="3.40.50.720">
    <property type="entry name" value="NAD(P)-binding Rossmann-like Domain"/>
    <property type="match status" value="1"/>
</dbReference>
<dbReference type="InterPro" id="IPR016040">
    <property type="entry name" value="NAD(P)-bd_dom"/>
</dbReference>
<dbReference type="InterPro" id="IPR036291">
    <property type="entry name" value="NAD(P)-bd_dom_sf"/>
</dbReference>
<dbReference type="PANTHER" id="PTHR14097">
    <property type="entry name" value="OXIDOREDUCTASE HTATIP2"/>
    <property type="match status" value="1"/>
</dbReference>
<dbReference type="PANTHER" id="PTHR14097:SF7">
    <property type="entry name" value="OXIDOREDUCTASE HTATIP2"/>
    <property type="match status" value="1"/>
</dbReference>
<dbReference type="Pfam" id="PF13460">
    <property type="entry name" value="NAD_binding_10"/>
    <property type="match status" value="1"/>
</dbReference>
<dbReference type="SUPFAM" id="SSF51735">
    <property type="entry name" value="NAD(P)-binding Rossmann-fold domains"/>
    <property type="match status" value="1"/>
</dbReference>
<feature type="initiator methionine" description="Removed" evidence="31">
    <location>
        <position position="1"/>
    </location>
</feature>
<feature type="chain" id="PRO_0000072544" description="Protein HTATIP2">
    <location>
        <begin position="2"/>
        <end position="242"/>
    </location>
</feature>
<feature type="region of interest" description="Required for interaction with elongation factor EEF1A1" evidence="1">
    <location>
        <begin position="2"/>
        <end position="25"/>
    </location>
</feature>
<feature type="active site" description="Proton acceptor" evidence="16">
    <location>
        <position position="143"/>
    </location>
</feature>
<feature type="active site" evidence="16">
    <location>
        <position position="147"/>
    </location>
</feature>
<feature type="binding site" evidence="8 29">
    <location>
        <position position="27"/>
    </location>
    <ligand>
        <name>NADPH</name>
        <dbReference type="ChEBI" id="CHEBI:57783"/>
    </ligand>
</feature>
<feature type="binding site" evidence="8 29">
    <location>
        <position position="28"/>
    </location>
    <ligand>
        <name>NADPH</name>
        <dbReference type="ChEBI" id="CHEBI:57783"/>
    </ligand>
</feature>
<feature type="binding site" evidence="8 29">
    <location>
        <position position="29"/>
    </location>
    <ligand>
        <name>NADPH</name>
        <dbReference type="ChEBI" id="CHEBI:57783"/>
    </ligand>
</feature>
<feature type="binding site" evidence="8 29">
    <location>
        <position position="30"/>
    </location>
    <ligand>
        <name>NADPH</name>
        <dbReference type="ChEBI" id="CHEBI:57783"/>
    </ligand>
</feature>
<feature type="binding site" evidence="8 29">
    <location>
        <position position="52"/>
    </location>
    <ligand>
        <name>NADPH</name>
        <dbReference type="ChEBI" id="CHEBI:57783"/>
    </ligand>
</feature>
<feature type="binding site" evidence="8 29">
    <location>
        <position position="53"/>
    </location>
    <ligand>
        <name>NADPH</name>
        <dbReference type="ChEBI" id="CHEBI:57783"/>
    </ligand>
</feature>
<feature type="binding site" evidence="8 29">
    <location>
        <position position="92"/>
    </location>
    <ligand>
        <name>NADPH</name>
        <dbReference type="ChEBI" id="CHEBI:57783"/>
    </ligand>
</feature>
<feature type="binding site" evidence="8 29">
    <location>
        <position position="93"/>
    </location>
    <ligand>
        <name>NADPH</name>
        <dbReference type="ChEBI" id="CHEBI:57783"/>
    </ligand>
</feature>
<feature type="binding site" evidence="8 29">
    <location>
        <position position="143"/>
    </location>
    <ligand>
        <name>NADPH</name>
        <dbReference type="ChEBI" id="CHEBI:57783"/>
    </ligand>
</feature>
<feature type="binding site" evidence="8 29">
    <location>
        <position position="147"/>
    </location>
    <ligand>
        <name>NADPH</name>
        <dbReference type="ChEBI" id="CHEBI:57783"/>
    </ligand>
</feature>
<feature type="binding site" evidence="8 29">
    <location>
        <position position="170"/>
    </location>
    <ligand>
        <name>NADPH</name>
        <dbReference type="ChEBI" id="CHEBI:57783"/>
    </ligand>
</feature>
<feature type="binding site" evidence="8 29">
    <location>
        <position position="178"/>
    </location>
    <ligand>
        <name>NADPH</name>
        <dbReference type="ChEBI" id="CHEBI:57783"/>
    </ligand>
</feature>
<feature type="modified residue" description="N-acetylalanine" evidence="31">
    <location>
        <position position="2"/>
    </location>
</feature>
<feature type="disulfide bond" description="Interchain; during oxidative stress" evidence="8 21 29">
    <location>
        <position position="172"/>
    </location>
</feature>
<feature type="splice variant" id="VSP_038339" description="In isoform 3." evidence="15">
    <original>M</original>
    <variation>MAGPAALSAAAAAALAAALLLLRREDPGPGAGPSM</variation>
    <location>
        <position position="1"/>
    </location>
</feature>
<feature type="splice variant" id="VSP_051864" description="In isoform 2." evidence="14 19">
    <original>EGFVRVDRDYVLKSAELAKAGGCKHFNLLSSK</original>
    <variation>VRKAYALFPFCWPVISRILFLLTLFLCACCNA</variation>
    <location>
        <begin position="102"/>
        <end position="133"/>
    </location>
</feature>
<feature type="splice variant" id="VSP_051865" description="In isoform 2." evidence="14 19">
    <location>
        <begin position="134"/>
        <end position="242"/>
    </location>
</feature>
<feature type="sequence variant" id="VAR_023713" description="In a hepatocellular carcinoma sample." evidence="4">
    <original>R</original>
    <variation>S</variation>
    <location>
        <position position="106"/>
    </location>
</feature>
<feature type="sequence variant" id="VAR_023714" description="In a hepatocellular carcinoma sample." evidence="4">
    <original>D</original>
    <variation>Y</variation>
    <location>
        <position position="108"/>
    </location>
</feature>
<feature type="sequence variant" id="VAR_023715" description="In a hepatocellular carcinoma sample; dbSNP:rs761113892." evidence="4">
    <original>A</original>
    <variation>T</variation>
    <location>
        <position position="116"/>
    </location>
</feature>
<feature type="sequence variant" id="VAR_023716" description="In a hepatocellular carcinoma sample; reduces protein stability." evidence="4">
    <original>G</original>
    <variation>V</variation>
    <location>
        <position position="134"/>
    </location>
</feature>
<feature type="sequence variant" id="VAR_023717" description="In a hepatocellular carcinoma sample." evidence="4">
    <original>L</original>
    <variation>I</variation>
    <location>
        <position position="144"/>
    </location>
</feature>
<feature type="sequence variant" id="VAR_023718" description="In dbSNP:rs3824886." evidence="7 10 12 30">
    <original>S</original>
    <variation>R</variation>
    <location>
        <position position="197"/>
    </location>
</feature>
<feature type="mutagenesis site" description="Loss of proapoptotic and metastatis-inhibiting effect." evidence="3">
    <original>GETG</original>
    <variation>VETA</variation>
    <location>
        <begin position="28"/>
        <end position="31"/>
    </location>
</feature>
<feature type="mutagenesis site" description="Loss of association with nucleus." evidence="4">
    <original>R</original>
    <variation>H</variation>
    <location>
        <position position="106"/>
    </location>
</feature>
<feature type="sequence conflict" description="In Ref. 5; CAG33102." evidence="20" ref="5">
    <original>V</original>
    <variation>F</variation>
    <location>
        <position position="87"/>
    </location>
</feature>
<feature type="sequence conflict" description="In Ref. 6; BAD96730." evidence="20" ref="6">
    <original>L</original>
    <variation>P</variation>
    <location>
        <position position="170"/>
    </location>
</feature>
<feature type="sequence conflict" description="In Ref. 2; AAC39694." evidence="20" ref="2">
    <original>W</original>
    <variation>R</variation>
    <location>
        <position position="182"/>
    </location>
</feature>
<feature type="sequence conflict" description="In Ref. 1; AAB84360." evidence="20" ref="1">
    <original>F</original>
    <variation>L</variation>
    <location>
        <position position="187"/>
    </location>
</feature>
<feature type="helix" evidence="32">
    <location>
        <begin position="6"/>
        <end position="16"/>
    </location>
</feature>
<feature type="strand" evidence="32">
    <location>
        <begin position="20"/>
        <end position="24"/>
    </location>
</feature>
<feature type="helix" evidence="32">
    <location>
        <begin position="29"/>
        <end position="41"/>
    </location>
</feature>
<feature type="strand" evidence="32">
    <location>
        <begin position="45"/>
        <end position="53"/>
    </location>
</feature>
<feature type="helix" evidence="32">
    <location>
        <begin position="60"/>
        <end position="64"/>
    </location>
</feature>
<feature type="strand" evidence="32">
    <location>
        <begin position="66"/>
        <end position="69"/>
    </location>
</feature>
<feature type="helix" evidence="32">
    <location>
        <begin position="72"/>
        <end position="82"/>
    </location>
</feature>
<feature type="strand" evidence="32">
    <location>
        <begin position="86"/>
        <end position="90"/>
    </location>
</feature>
<feature type="helix" evidence="32">
    <location>
        <begin position="96"/>
        <end position="108"/>
    </location>
</feature>
<feature type="helix" evidence="32">
    <location>
        <begin position="110"/>
        <end position="121"/>
    </location>
</feature>
<feature type="strand" evidence="32">
    <location>
        <begin position="126"/>
        <end position="130"/>
    </location>
</feature>
<feature type="helix" evidence="32">
    <location>
        <begin position="142"/>
        <end position="155"/>
    </location>
</feature>
<feature type="strand" evidence="32">
    <location>
        <begin position="160"/>
        <end position="166"/>
    </location>
</feature>
<feature type="strand" evidence="32">
    <location>
        <begin position="169"/>
        <end position="171"/>
    </location>
</feature>
<feature type="helix" evidence="32">
    <location>
        <begin position="175"/>
        <end position="177"/>
    </location>
</feature>
<feature type="helix" evidence="32">
    <location>
        <begin position="179"/>
        <end position="188"/>
    </location>
</feature>
<feature type="helix" evidence="32">
    <location>
        <begin position="195"/>
        <end position="198"/>
    </location>
</feature>
<feature type="strand" evidence="32">
    <location>
        <begin position="200"/>
        <end position="202"/>
    </location>
</feature>
<feature type="helix" evidence="32">
    <location>
        <begin position="203"/>
        <end position="214"/>
    </location>
</feature>
<feature type="strand" evidence="32">
    <location>
        <begin position="220"/>
        <end position="226"/>
    </location>
</feature>
<feature type="helix" evidence="32">
    <location>
        <begin position="227"/>
        <end position="233"/>
    </location>
</feature>
<proteinExistence type="evidence at protein level"/>
<gene>
    <name evidence="28" type="primary">HTATIP2</name>
    <name evidence="22" type="synonym">CC3</name>
    <name evidence="18" type="synonym">TIP30</name>
</gene>
<evidence type="ECO:0000250" key="1">
    <source>
        <dbReference type="UniProtKB" id="B0BNF8"/>
    </source>
</evidence>
<evidence type="ECO:0000269" key="2">
    <source>
    </source>
</evidence>
<evidence type="ECO:0000269" key="3">
    <source>
    </source>
</evidence>
<evidence type="ECO:0000269" key="4">
    <source>
    </source>
</evidence>
<evidence type="ECO:0000269" key="5">
    <source>
    </source>
</evidence>
<evidence type="ECO:0000269" key="6">
    <source>
    </source>
</evidence>
<evidence type="ECO:0000269" key="7">
    <source>
    </source>
</evidence>
<evidence type="ECO:0000269" key="8">
    <source>
    </source>
</evidence>
<evidence type="ECO:0000269" key="9">
    <source>
    </source>
</evidence>
<evidence type="ECO:0000269" key="10">
    <source>
    </source>
</evidence>
<evidence type="ECO:0000269" key="11">
    <source>
    </source>
</evidence>
<evidence type="ECO:0000269" key="12">
    <source>
    </source>
</evidence>
<evidence type="ECO:0000269" key="13">
    <source>
    </source>
</evidence>
<evidence type="ECO:0000303" key="14">
    <source>
    </source>
</evidence>
<evidence type="ECO:0000303" key="15">
    <source>
    </source>
</evidence>
<evidence type="ECO:0000303" key="16">
    <source>
    </source>
</evidence>
<evidence type="ECO:0000303" key="17">
    <source>
    </source>
</evidence>
<evidence type="ECO:0000303" key="18">
    <source>
    </source>
</evidence>
<evidence type="ECO:0000303" key="19">
    <source ref="5"/>
</evidence>
<evidence type="ECO:0000305" key="20"/>
<evidence type="ECO:0000305" key="21">
    <source>
    </source>
</evidence>
<evidence type="ECO:0000312" key="22">
    <source>
        <dbReference type="EMBL" id="AAB84360.1"/>
    </source>
</evidence>
<evidence type="ECO:0000312" key="23">
    <source>
        <dbReference type="EMBL" id="AAC39694.1"/>
    </source>
</evidence>
<evidence type="ECO:0000312" key="24">
    <source>
        <dbReference type="EMBL" id="AAC78331.1"/>
    </source>
</evidence>
<evidence type="ECO:0000312" key="25">
    <source>
        <dbReference type="EMBL" id="AAH15358.1"/>
    </source>
</evidence>
<evidence type="ECO:0000312" key="26">
    <source>
        <dbReference type="EMBL" id="BAD96730.1"/>
    </source>
</evidence>
<evidence type="ECO:0000312" key="27">
    <source>
        <dbReference type="EMBL" id="CAG33102.1"/>
    </source>
</evidence>
<evidence type="ECO:0000312" key="28">
    <source>
        <dbReference type="HGNC" id="HGNC:16637"/>
    </source>
</evidence>
<evidence type="ECO:0007744" key="29">
    <source>
        <dbReference type="PDB" id="2BKA"/>
    </source>
</evidence>
<evidence type="ECO:0007744" key="30">
    <source>
    </source>
</evidence>
<evidence type="ECO:0007744" key="31">
    <source>
    </source>
</evidence>
<evidence type="ECO:0007829" key="32">
    <source>
        <dbReference type="PDB" id="2BKA"/>
    </source>
</evidence>
<keyword id="KW-0002">3D-structure</keyword>
<keyword id="KW-0007">Acetylation</keyword>
<keyword id="KW-0025">Alternative splicing</keyword>
<keyword id="KW-0963">Cytoplasm</keyword>
<keyword id="KW-1015">Disulfide bond</keyword>
<keyword id="KW-0945">Host-virus interaction</keyword>
<keyword id="KW-0521">NADP</keyword>
<keyword id="KW-1267">Proteomics identification</keyword>
<keyword id="KW-1185">Reference proteome</keyword>
<keyword id="KW-0810">Translation regulation</keyword>
<keyword id="KW-0043">Tumor suppressor</keyword>
<organism>
    <name type="scientific">Homo sapiens</name>
    <name type="common">Human</name>
    <dbReference type="NCBI Taxonomy" id="9606"/>
    <lineage>
        <taxon>Eukaryota</taxon>
        <taxon>Metazoa</taxon>
        <taxon>Chordata</taxon>
        <taxon>Craniata</taxon>
        <taxon>Vertebrata</taxon>
        <taxon>Euteleostomi</taxon>
        <taxon>Mammalia</taxon>
        <taxon>Eutheria</taxon>
        <taxon>Euarchontoglires</taxon>
        <taxon>Primates</taxon>
        <taxon>Haplorrhini</taxon>
        <taxon>Catarrhini</taxon>
        <taxon>Hominidae</taxon>
        <taxon>Homo</taxon>
    </lineage>
</organism>
<accession>Q9BUP3</accession>
<accession>A8K7S7</accession>
<accession>D3DQY8</accession>
<accession>O15383</accession>
<accession>O60520</accession>
<accession>O95345</accession>
<accession>Q53GC1</accession>
<accession>Q53GG2</accession>
<accession>Q6IBI3</accession>
<protein>
    <recommendedName>
        <fullName evidence="20">Protein HTATIP2</fullName>
    </recommendedName>
    <alternativeName>
        <fullName>30 kDa HIV-1 TAT-interacting protein</fullName>
    </alternativeName>
    <alternativeName>
        <fullName>HIV-1 TAT-interactive protein 2</fullName>
    </alternativeName>
</protein>
<name>HTAI2_HUMAN</name>
<reference evidence="20 22" key="1">
    <citation type="journal article" date="1997" name="Oncogene">
        <title>A link between metastasis and resistance to apoptosis of variant small cell lung carcinoma.</title>
        <authorList>
            <person name="Shtivelman E."/>
        </authorList>
    </citation>
    <scope>NUCLEOTIDE SEQUENCE [MRNA] (ISOFORM 1)</scope>
    <scope>TISSUE SPECIFICITY</scope>
    <scope>VARIANT ARG-197</scope>
    <source>
        <tissue evidence="12">Lung cancer</tissue>
    </source>
</reference>
<reference evidence="20 23" key="2">
    <citation type="journal article" date="1998" name="Proc. Natl. Acad. Sci. U.S.A.">
        <title>A cofactor, TIP30, specifically enhances HIV-1 Tat-activated transcription.</title>
        <authorList>
            <person name="Xiao H."/>
            <person name="Tao Y."/>
            <person name="Greenblatt J."/>
            <person name="Roeder R.G."/>
        </authorList>
    </citation>
    <scope>NUCLEOTIDE SEQUENCE [MRNA] (ISOFORM 1)</scope>
    <scope>INTERACTION WITH HIV-1 TAT (MICROBIAL INFECTION)</scope>
    <source>
        <tissue>Pancreatic islet</tissue>
    </source>
</reference>
<reference evidence="20 24" key="3">
    <citation type="journal article" date="2000" name="Mol. Cell. Biol.">
        <title>Alternatively spliced products CC3 and TC3 have opposing effects on apoptosis.</title>
        <authorList>
            <person name="Whitman S."/>
            <person name="Wang X."/>
            <person name="Shalaby R."/>
            <person name="Shtivelman E."/>
        </authorList>
    </citation>
    <scope>NUCLEOTIDE SEQUENCE [MRNA] (ISOFORM 2)</scope>
    <scope>INTERACTION WITH PSMD4 (ISOFORM 2)</scope>
    <source>
        <tissue evidence="24">Placenta</tissue>
    </source>
</reference>
<reference key="4">
    <citation type="journal article" date="2004" name="Nat. Genet.">
        <title>Complete sequencing and characterization of 21,243 full-length human cDNAs.</title>
        <authorList>
            <person name="Ota T."/>
            <person name="Suzuki Y."/>
            <person name="Nishikawa T."/>
            <person name="Otsuki T."/>
            <person name="Sugiyama T."/>
            <person name="Irie R."/>
            <person name="Wakamatsu A."/>
            <person name="Hayashi K."/>
            <person name="Sato H."/>
            <person name="Nagai K."/>
            <person name="Kimura K."/>
            <person name="Makita H."/>
            <person name="Sekine M."/>
            <person name="Obayashi M."/>
            <person name="Nishi T."/>
            <person name="Shibahara T."/>
            <person name="Tanaka T."/>
            <person name="Ishii S."/>
            <person name="Yamamoto J."/>
            <person name="Saito K."/>
            <person name="Kawai Y."/>
            <person name="Isono Y."/>
            <person name="Nakamura Y."/>
            <person name="Nagahari K."/>
            <person name="Murakami K."/>
            <person name="Yasuda T."/>
            <person name="Iwayanagi T."/>
            <person name="Wagatsuma M."/>
            <person name="Shiratori A."/>
            <person name="Sudo H."/>
            <person name="Hosoiri T."/>
            <person name="Kaku Y."/>
            <person name="Kodaira H."/>
            <person name="Kondo H."/>
            <person name="Sugawara M."/>
            <person name="Takahashi M."/>
            <person name="Kanda K."/>
            <person name="Yokoi T."/>
            <person name="Furuya T."/>
            <person name="Kikkawa E."/>
            <person name="Omura Y."/>
            <person name="Abe K."/>
            <person name="Kamihara K."/>
            <person name="Katsuta N."/>
            <person name="Sato K."/>
            <person name="Tanikawa M."/>
            <person name="Yamazaki M."/>
            <person name="Ninomiya K."/>
            <person name="Ishibashi T."/>
            <person name="Yamashita H."/>
            <person name="Murakawa K."/>
            <person name="Fujimori K."/>
            <person name="Tanai H."/>
            <person name="Kimata M."/>
            <person name="Watanabe M."/>
            <person name="Hiraoka S."/>
            <person name="Chiba Y."/>
            <person name="Ishida S."/>
            <person name="Ono Y."/>
            <person name="Takiguchi S."/>
            <person name="Watanabe S."/>
            <person name="Yosida M."/>
            <person name="Hotuta T."/>
            <person name="Kusano J."/>
            <person name="Kanehori K."/>
            <person name="Takahashi-Fujii A."/>
            <person name="Hara H."/>
            <person name="Tanase T.-O."/>
            <person name="Nomura Y."/>
            <person name="Togiya S."/>
            <person name="Komai F."/>
            <person name="Hara R."/>
            <person name="Takeuchi K."/>
            <person name="Arita M."/>
            <person name="Imose N."/>
            <person name="Musashino K."/>
            <person name="Yuuki H."/>
            <person name="Oshima A."/>
            <person name="Sasaki N."/>
            <person name="Aotsuka S."/>
            <person name="Yoshikawa Y."/>
            <person name="Matsunawa H."/>
            <person name="Ichihara T."/>
            <person name="Shiohata N."/>
            <person name="Sano S."/>
            <person name="Moriya S."/>
            <person name="Momiyama H."/>
            <person name="Satoh N."/>
            <person name="Takami S."/>
            <person name="Terashima Y."/>
            <person name="Suzuki O."/>
            <person name="Nakagawa S."/>
            <person name="Senoh A."/>
            <person name="Mizoguchi H."/>
            <person name="Goto Y."/>
            <person name="Shimizu F."/>
            <person name="Wakebe H."/>
            <person name="Hishigaki H."/>
            <person name="Watanabe T."/>
            <person name="Sugiyama A."/>
            <person name="Takemoto M."/>
            <person name="Kawakami B."/>
            <person name="Yamazaki M."/>
            <person name="Watanabe K."/>
            <person name="Kumagai A."/>
            <person name="Itakura S."/>
            <person name="Fukuzumi Y."/>
            <person name="Fujimori Y."/>
            <person name="Komiyama M."/>
            <person name="Tashiro H."/>
            <person name="Tanigami A."/>
            <person name="Fujiwara T."/>
            <person name="Ono T."/>
            <person name="Yamada K."/>
            <person name="Fujii Y."/>
            <person name="Ozaki K."/>
            <person name="Hirao M."/>
            <person name="Ohmori Y."/>
            <person name="Kawabata A."/>
            <person name="Hikiji T."/>
            <person name="Kobatake N."/>
            <person name="Inagaki H."/>
            <person name="Ikema Y."/>
            <person name="Okamoto S."/>
            <person name="Okitani R."/>
            <person name="Kawakami T."/>
            <person name="Noguchi S."/>
            <person name="Itoh T."/>
            <person name="Shigeta K."/>
            <person name="Senba T."/>
            <person name="Matsumura K."/>
            <person name="Nakajima Y."/>
            <person name="Mizuno T."/>
            <person name="Morinaga M."/>
            <person name="Sasaki M."/>
            <person name="Togashi T."/>
            <person name="Oyama M."/>
            <person name="Hata H."/>
            <person name="Watanabe M."/>
            <person name="Komatsu T."/>
            <person name="Mizushima-Sugano J."/>
            <person name="Satoh T."/>
            <person name="Shirai Y."/>
            <person name="Takahashi Y."/>
            <person name="Nakagawa K."/>
            <person name="Okumura K."/>
            <person name="Nagase T."/>
            <person name="Nomura N."/>
            <person name="Kikuchi H."/>
            <person name="Masuho Y."/>
            <person name="Yamashita R."/>
            <person name="Nakai K."/>
            <person name="Yada T."/>
            <person name="Nakamura Y."/>
            <person name="Ohara O."/>
            <person name="Isogai T."/>
            <person name="Sugano S."/>
        </authorList>
    </citation>
    <scope>NUCLEOTIDE SEQUENCE [LARGE SCALE MRNA] (ISOFORM 1)</scope>
    <source>
        <tissue>Synovium</tissue>
    </source>
</reference>
<reference evidence="20 27" key="5">
    <citation type="submission" date="2004-06" db="EMBL/GenBank/DDBJ databases">
        <title>Cloning of human full open reading frames in Gateway(TM) system entry vector (pDONR201).</title>
        <authorList>
            <person name="Ebert L."/>
            <person name="Schick M."/>
            <person name="Neubert P."/>
            <person name="Schatten R."/>
            <person name="Henze S."/>
            <person name="Korn B."/>
        </authorList>
    </citation>
    <scope>NUCLEOTIDE SEQUENCE [LARGE SCALE MRNA] (ISOFORM 2)</scope>
</reference>
<reference evidence="20 27" key="6">
    <citation type="submission" date="2005-04" db="EMBL/GenBank/DDBJ databases">
        <authorList>
            <person name="Suzuki Y."/>
            <person name="Sugano S."/>
            <person name="Totoki Y."/>
            <person name="Toyoda A."/>
            <person name="Takeda T."/>
            <person name="Sakaki Y."/>
            <person name="Tanaka A."/>
            <person name="Yokoyama S."/>
        </authorList>
    </citation>
    <scope>NUCLEOTIDE SEQUENCE [LARGE SCALE MRNA] (ISOFORM 1)</scope>
    <source>
        <tissue evidence="26">Small intestine</tissue>
    </source>
</reference>
<reference key="7">
    <citation type="journal article" date="2006" name="Nature">
        <title>Human chromosome 11 DNA sequence and analysis including novel gene identification.</title>
        <authorList>
            <person name="Taylor T.D."/>
            <person name="Noguchi H."/>
            <person name="Totoki Y."/>
            <person name="Toyoda A."/>
            <person name="Kuroki Y."/>
            <person name="Dewar K."/>
            <person name="Lloyd C."/>
            <person name="Itoh T."/>
            <person name="Takeda T."/>
            <person name="Kim D.-W."/>
            <person name="She X."/>
            <person name="Barlow K.F."/>
            <person name="Bloom T."/>
            <person name="Bruford E."/>
            <person name="Chang J.L."/>
            <person name="Cuomo C.A."/>
            <person name="Eichler E."/>
            <person name="FitzGerald M.G."/>
            <person name="Jaffe D.B."/>
            <person name="LaButti K."/>
            <person name="Nicol R."/>
            <person name="Park H.-S."/>
            <person name="Seaman C."/>
            <person name="Sougnez C."/>
            <person name="Yang X."/>
            <person name="Zimmer A.R."/>
            <person name="Zody M.C."/>
            <person name="Birren B.W."/>
            <person name="Nusbaum C."/>
            <person name="Fujiyama A."/>
            <person name="Hattori M."/>
            <person name="Rogers J."/>
            <person name="Lander E.S."/>
            <person name="Sakaki Y."/>
        </authorList>
    </citation>
    <scope>NUCLEOTIDE SEQUENCE [LARGE SCALE GENOMIC DNA]</scope>
</reference>
<reference evidence="20 27" key="8">
    <citation type="submission" date="2005-09" db="EMBL/GenBank/DDBJ databases">
        <authorList>
            <person name="Mural R.J."/>
            <person name="Istrail S."/>
            <person name="Sutton G.G."/>
            <person name="Florea L."/>
            <person name="Halpern A.L."/>
            <person name="Mobarry C.M."/>
            <person name="Lippert R."/>
            <person name="Walenz B."/>
            <person name="Shatkay H."/>
            <person name="Dew I."/>
            <person name="Miller J.R."/>
            <person name="Flanigan M.J."/>
            <person name="Edwards N.J."/>
            <person name="Bolanos R."/>
            <person name="Fasulo D."/>
            <person name="Halldorsson B.V."/>
            <person name="Hannenhalli S."/>
            <person name="Turner R."/>
            <person name="Yooseph S."/>
            <person name="Lu F."/>
            <person name="Nusskern D.R."/>
            <person name="Shue B.C."/>
            <person name="Zheng X.H."/>
            <person name="Zhong F."/>
            <person name="Delcher A.L."/>
            <person name="Huson D.H."/>
            <person name="Kravitz S.A."/>
            <person name="Mouchard L."/>
            <person name="Reinert K."/>
            <person name="Remington K.A."/>
            <person name="Clark A.G."/>
            <person name="Waterman M.S."/>
            <person name="Eichler E.E."/>
            <person name="Adams M.D."/>
            <person name="Hunkapiller M.W."/>
            <person name="Myers E.W."/>
            <person name="Venter J.C."/>
        </authorList>
    </citation>
    <scope>NUCLEOTIDE SEQUENCE [LARGE SCALE GENOMIC DNA]</scope>
</reference>
<reference evidence="20 25" key="9">
    <citation type="journal article" date="2004" name="Genome Res.">
        <title>The status, quality, and expansion of the NIH full-length cDNA project: the Mammalian Gene Collection (MGC).</title>
        <authorList>
            <consortium name="The MGC Project Team"/>
        </authorList>
    </citation>
    <scope>NUCLEOTIDE SEQUENCE [LARGE SCALE MRNA] (ISOFORMS 1 AND 3)</scope>
    <scope>VARIANT ARG-197</scope>
    <source>
        <tissue evidence="25">Cervix</tissue>
        <tissue>Skin</tissue>
    </source>
</reference>
<reference evidence="20" key="10">
    <citation type="journal article" date="2000" name="EMBO J.">
        <title>TIP30 has an intrinsic kinase activity required for up-regulation of a subset of apoptotic genes.</title>
        <authorList>
            <person name="Xiao H."/>
            <person name="Palhan V."/>
            <person name="Yang Y."/>
            <person name="Roeder R.G."/>
        </authorList>
    </citation>
    <scope>MUTAGENESIS OF 28-GLY--GLY-31</scope>
</reference>
<reference evidence="20" key="11">
    <citation type="journal article" date="2003" name="Cancer Res.">
        <title>TIP30 deficiency increases susceptibility to tumorigenesis.</title>
        <authorList>
            <person name="Ito M."/>
            <person name="Jiang C."/>
            <person name="Krumm K."/>
            <person name="Zhang X."/>
            <person name="Pecha J."/>
            <person name="Zhao J."/>
            <person name="Guo Y."/>
            <person name="Roeder R.G."/>
            <person name="Xiao H."/>
        </authorList>
    </citation>
    <scope>TISSUE SPECIFICITY</scope>
    <scope>VARIANTS SER-106; TYR-108; THR-116; VAL-134 AND ILE-144</scope>
    <scope>MUTAGENESIS OF ARG-106</scope>
    <scope>CHARACTERIZATION OF VARIANT VAL-134</scope>
</reference>
<reference evidence="20" key="12">
    <citation type="journal article" date="2004" name="J. Biol. Chem.">
        <title>TIP30 interacts with an estrogen receptor alpha-interacting coactivator CIA and regulates c-myc transcription.</title>
        <authorList>
            <person name="Jiang C."/>
            <person name="Ito M."/>
            <person name="Piening V."/>
            <person name="Bruck K."/>
            <person name="Roeder R.G."/>
            <person name="Xiao H."/>
        </authorList>
    </citation>
    <scope>INTERACTION WITH NCOA5</scope>
</reference>
<reference evidence="20" key="13">
    <citation type="journal article" date="2004" name="Mol. Cell. Biol.">
        <title>Inhibition of nuclear import by the proapoptotic protein CC3.</title>
        <authorList>
            <person name="King F.W."/>
            <person name="Shtivelman E."/>
        </authorList>
    </citation>
    <scope>FUNCTION</scope>
    <scope>SUBCELLULAR LOCATION</scope>
    <scope>INTERACTION WITH XPO4; IPO5; IPO7; IPO9; KPNB1; GCN1L1 AND LRPPRC</scope>
</reference>
<reference key="14">
    <citation type="journal article" date="2008" name="Cancer Res.">
        <title>TIP30 induces apoptosis under oxidative stress through stabilization of p53 messenger RNA in human hepatocellular carcinoma.</title>
        <authorList>
            <person name="Zhao J."/>
            <person name="Chen J."/>
            <person name="Lu B."/>
            <person name="Dong L."/>
            <person name="Wang H."/>
            <person name="Bi C."/>
            <person name="Wu G."/>
            <person name="Guo H."/>
            <person name="Wu M."/>
            <person name="Guo Y."/>
        </authorList>
    </citation>
    <scope>FUNCTION</scope>
    <scope>SUBUNIT</scope>
    <scope>DISULFIDE BOND</scope>
</reference>
<reference key="15">
    <citation type="journal article" date="2012" name="Proc. Natl. Acad. Sci. U.S.A.">
        <title>N-terminal acetylome analyses and functional insights of the N-terminal acetyltransferase NatB.</title>
        <authorList>
            <person name="Van Damme P."/>
            <person name="Lasa M."/>
            <person name="Polevoda B."/>
            <person name="Gazquez C."/>
            <person name="Elosegui-Artola A."/>
            <person name="Kim D.S."/>
            <person name="De Juan-Pardo E."/>
            <person name="Demeyer K."/>
            <person name="Hole K."/>
            <person name="Larrea E."/>
            <person name="Timmerman E."/>
            <person name="Prieto J."/>
            <person name="Arnesen T."/>
            <person name="Sherman F."/>
            <person name="Gevaert K."/>
            <person name="Aldabe R."/>
        </authorList>
    </citation>
    <scope>ACETYLATION [LARGE SCALE ANALYSIS] AT ALA-2</scope>
    <scope>CLEAVAGE OF INITIATOR METHIONINE [LARGE SCALE ANALYSIS]</scope>
    <scope>IDENTIFICATION BY MASS SPECTROMETRY [LARGE SCALE ANALYSIS]</scope>
</reference>
<reference key="16">
    <citation type="journal article" date="2015" name="Proteomics">
        <title>N-terminome analysis of the human mitochondrial proteome.</title>
        <authorList>
            <person name="Vaca Jacome A.S."/>
            <person name="Rabilloud T."/>
            <person name="Schaeffer-Reiss C."/>
            <person name="Rompais M."/>
            <person name="Ayoub D."/>
            <person name="Lane L."/>
            <person name="Bairoch A."/>
            <person name="Van Dorsselaer A."/>
            <person name="Carapito C."/>
        </authorList>
    </citation>
    <scope>IDENTIFICATION BY MASS SPECTROMETRY [LARGE SCALE ANALYSIS]</scope>
</reference>
<reference key="17">
    <citation type="journal article" date="2019" name="EMBO Mol. Med.">
        <title>TIP30 counteracts cardiac hypertrophy and failure by inhibiting translational elongation.</title>
        <authorList>
            <person name="Grund A."/>
            <person name="Szaroszyk M."/>
            <person name="Korf-Klingebiel M."/>
            <person name="Malek Mohammadi M."/>
            <person name="Trogisch F.A."/>
            <person name="Schrameck U."/>
            <person name="Gigina A."/>
            <person name="Tiedje C."/>
            <person name="Gaestel M."/>
            <person name="Kraft T."/>
            <person name="Hegermann J."/>
            <person name="Batkai S."/>
            <person name="Thum T."/>
            <person name="Perrot A."/>
            <person name="Remedios C.D."/>
            <person name="Riechert E."/>
            <person name="Voelkers M."/>
            <person name="Doroudgar S."/>
            <person name="Jungmann A."/>
            <person name="Bauer R."/>
            <person name="Yin X."/>
            <person name="Mayr M."/>
            <person name="Wollert K.C."/>
            <person name="Pich A."/>
            <person name="Xiao H."/>
            <person name="Katus H.A."/>
            <person name="Bauersachs J."/>
            <person name="Mueller O.J."/>
            <person name="Heineke J."/>
        </authorList>
    </citation>
    <scope>TISSUE SPECIFICITY</scope>
</reference>
<reference evidence="29" key="18">
    <citation type="journal article" date="2005" name="J. Biol. Chem.">
        <title>Crystal structure of CC3 (TIP30): implications for its role as a tumor suppressor.</title>
        <authorList>
            <person name="El Omari K."/>
            <person name="Bird L.E."/>
            <person name="Nichols C.E."/>
            <person name="Ren J."/>
            <person name="Stammers D.K."/>
        </authorList>
    </citation>
    <scope>X-RAY CRYSTALLOGRAPHY (1.7 ANGSTROMS) IN COMPLEX WITH NADPH</scope>
    <scope>SUBUNIT</scope>
    <scope>DISULFIDE BOND</scope>
</reference>
<reference key="19">
    <citation type="journal article" date="2011" name="BMC Syst. Biol.">
        <title>Initial characterization of the human central proteome.</title>
        <authorList>
            <person name="Burkard T.R."/>
            <person name="Planyavsky M."/>
            <person name="Kaupe I."/>
            <person name="Breitwieser F.P."/>
            <person name="Buerckstuemmer T."/>
            <person name="Bennett K.L."/>
            <person name="Superti-Furga G."/>
            <person name="Colinge J."/>
        </authorList>
    </citation>
    <scope>VARIANT [LARGE SCALE ANALYSIS] ARG-197</scope>
    <scope>IDENTIFICATION BY MASS SPECTROMETRY [LARGE SCALE ANALYSIS]</scope>
</reference>
<reference key="20">
    <citation type="journal article" date="2014" name="J. Proteome Res.">
        <title>Large-scale quantification of single amino-acid variations by a variation-associated database search strategy.</title>
        <authorList>
            <person name="Song C."/>
            <person name="Wang F."/>
            <person name="Cheng K."/>
            <person name="Wei X."/>
            <person name="Bian Y."/>
            <person name="Wang K."/>
            <person name="Tan Y."/>
            <person name="Wang H."/>
            <person name="Ye M."/>
            <person name="Zou H."/>
        </authorList>
    </citation>
    <scope>VARIANT ARG-197</scope>
</reference>
<sequence length="242" mass="27049">MAETEALSKLREDFRMQNKSVFILGASGETGRVLLKEILEQGLFSKVTLIGRRKLTFDEEAYKNVNQEVVDFEKLDDYASAFQGHDVGFCCLGTTRGKAGAEGFVRVDRDYVLKSAELAKAGGCKHFNLLSSKGADKSSNFLYLQVKGEVEAKVEELKFDRYSVFRPGVLLCDRQESRPGEWLVRKFFGSLPDSWASGHSVPVVTVVRAMLNNVVRPRDKQMELLENKAIHDLGKAHGSLKP</sequence>
<comment type="function">
    <text evidence="1 6 9">Represses translation by preventing reactivation of elongation factor eEF1A (By similarity). May also inhibit nuclear import by competing with nuclear import substrates for binding to a subset of nuclear transport receptors (PubMed:15282309). Has additionally been proposed to act as a redox sensor involved in cellular oxidative stress surveillance (PubMed:18519672).</text>
</comment>
<comment type="subunit">
    <text evidence="1 5 6 8 9">Monomer (PubMed:15728189). Forms homodimers during oxidative stress (PubMed:18519672). Interacts (via N-terminus) with elongation factor EEF1A1 (via middle-region); the interaction is direct and competes with EEF1A1 binding to guanyl-nucleotide exchange factor EEF1B2, thereby inhibiting GDP for GTP exchange and reactivation of EEF1A1 (By similarity). Interacts with nuclear transport receptors XPO4, IPO5/RANBP5, IPO7, IPO9 and KPNB1 as well as GCN1L1/GCN1 and LRPPRC probably through their HEAT repeats (PubMed:15282309). Binds NCOA5/CIA (PubMed:15073177).</text>
</comment>
<comment type="subunit">
    <molecule>Isoform 2</molecule>
    <text evidence="2">Interacts (via N-terminus) with proteasome subunit PSMD4/s5a.</text>
</comment>
<comment type="subunit">
    <text evidence="13">(Microbial infection) Interacts with HIV-1 Tat (via activation domain).</text>
</comment>
<comment type="interaction">
    <interactant intactId="EBI-13625358">
        <id>Q9BUP3</id>
    </interactant>
    <interactant intactId="EBI-3907816">
        <id>P54852</id>
        <label>EMP3</label>
    </interactant>
    <organismsDiffer>false</organismsDiffer>
    <experiments>3</experiments>
</comment>
<comment type="interaction">
    <interactant intactId="EBI-12937691">
        <id>Q9BUP3-3</id>
    </interactant>
    <interactant intactId="EBI-7131019">
        <id>Q8TB40</id>
        <label>ABHD4</label>
    </interactant>
    <organismsDiffer>false</organismsDiffer>
    <experiments>3</experiments>
</comment>
<comment type="interaction">
    <interactant intactId="EBI-12937691">
        <id>Q9BUP3-3</id>
    </interactant>
    <interactant intactId="EBI-13059134">
        <id>Q13520</id>
        <label>AQP6</label>
    </interactant>
    <organismsDiffer>false</organismsDiffer>
    <experiments>3</experiments>
</comment>
<comment type="interaction">
    <interactant intactId="EBI-12937691">
        <id>Q9BUP3-3</id>
    </interactant>
    <interactant intactId="EBI-2339219">
        <id>Q08426</id>
        <label>EHHADH</label>
    </interactant>
    <organismsDiffer>false</organismsDiffer>
    <experiments>3</experiments>
</comment>
<comment type="interaction">
    <interactant intactId="EBI-12937691">
        <id>Q9BUP3-3</id>
    </interactant>
    <interactant intactId="EBI-18304435">
        <id>Q5JX71</id>
        <label>FAM209A</label>
    </interactant>
    <organismsDiffer>false</organismsDiffer>
    <experiments>3</experiments>
</comment>
<comment type="interaction">
    <interactant intactId="EBI-12937691">
        <id>Q9BUP3-3</id>
    </interactant>
    <interactant intactId="EBI-11722638">
        <id>Q8N6M3</id>
        <label>FITM2</label>
    </interactant>
    <organismsDiffer>false</organismsDiffer>
    <experiments>3</experiments>
</comment>
<comment type="interaction">
    <interactant intactId="EBI-12937691">
        <id>Q9BUP3-3</id>
    </interactant>
    <interactant intactId="EBI-18908258">
        <id>O00258</id>
        <label>GET1</label>
    </interactant>
    <organismsDiffer>false</organismsDiffer>
    <experiments>3</experiments>
</comment>
<comment type="interaction">
    <interactant intactId="EBI-12937691">
        <id>Q9BUP3-3</id>
    </interactant>
    <interactant intactId="EBI-1052304">
        <id>Q8NBQ5</id>
        <label>HSD17B11</label>
    </interactant>
    <organismsDiffer>false</organismsDiffer>
    <experiments>3</experiments>
</comment>
<comment type="interaction">
    <interactant intactId="EBI-12937691">
        <id>Q9BUP3-3</id>
    </interactant>
    <interactant intactId="EBI-10266796">
        <id>Q8N5M9</id>
        <label>JAGN1</label>
    </interactant>
    <organismsDiffer>false</organismsDiffer>
    <experiments>3</experiments>
</comment>
<comment type="interaction">
    <interactant intactId="EBI-12937691">
        <id>Q9BUP3-3</id>
    </interactant>
    <interactant intactId="EBI-465137">
        <id>Q9HDC5</id>
        <label>JPH1</label>
    </interactant>
    <organismsDiffer>false</organismsDiffer>
    <experiments>3</experiments>
</comment>
<comment type="interaction">
    <interactant intactId="EBI-12937691">
        <id>Q9BUP3-3</id>
    </interactant>
    <interactant intactId="EBI-740987">
        <id>Q9NQG6</id>
        <label>MIEF1</label>
    </interactant>
    <organismsDiffer>false</organismsDiffer>
    <experiments>3</experiments>
</comment>
<comment type="interaction">
    <interactant intactId="EBI-12937691">
        <id>Q9BUP3-3</id>
    </interactant>
    <interactant intactId="EBI-3923617">
        <id>Q9H2K0</id>
        <label>MTIF3</label>
    </interactant>
    <organismsDiffer>false</organismsDiffer>
    <experiments>3</experiments>
</comment>
<comment type="interaction">
    <interactant intactId="EBI-12937691">
        <id>Q9BUP3-3</id>
    </interactant>
    <interactant intactId="EBI-14223623">
        <id>Q9UKF7-2</id>
        <label>PITPNC1</label>
    </interactant>
    <organismsDiffer>false</organismsDiffer>
    <experiments>3</experiments>
</comment>
<comment type="interaction">
    <interactant intactId="EBI-12937691">
        <id>Q9BUP3-3</id>
    </interactant>
    <interactant intactId="EBI-2115275">
        <id>Q99541</id>
        <label>PLIN2</label>
    </interactant>
    <organismsDiffer>false</organismsDiffer>
    <experiments>3</experiments>
</comment>
<comment type="interaction">
    <interactant intactId="EBI-12937691">
        <id>Q9BUP3-3</id>
    </interactant>
    <interactant intactId="EBI-7545592">
        <id>Q9H6H4</id>
        <label>REEP4</label>
    </interactant>
    <organismsDiffer>false</organismsDiffer>
    <experiments>3</experiments>
</comment>
<comment type="interaction">
    <interactant intactId="EBI-12937691">
        <id>Q9BUP3-3</id>
    </interactant>
    <interactant intactId="EBI-10192441">
        <id>Q86VR2</id>
        <label>RETREG3</label>
    </interactant>
    <organismsDiffer>false</organismsDiffer>
    <experiments>3</experiments>
</comment>
<comment type="interaction">
    <interactant intactId="EBI-12937691">
        <id>Q9BUP3-3</id>
    </interactant>
    <interactant intactId="EBI-2623095">
        <id>Q9Y371</id>
        <label>SH3GLB1</label>
    </interactant>
    <organismsDiffer>false</organismsDiffer>
    <experiments>3</experiments>
</comment>
<comment type="interaction">
    <interactant intactId="EBI-12937691">
        <id>Q9BUP3-3</id>
    </interactant>
    <interactant intactId="EBI-18159983">
        <id>Q3KNW5</id>
        <label>SLC10A6</label>
    </interactant>
    <organismsDiffer>false</organismsDiffer>
    <experiments>3</experiments>
</comment>
<comment type="interaction">
    <interactant intactId="EBI-12937691">
        <id>Q9BUP3-3</id>
    </interactant>
    <interactant intactId="EBI-8633987">
        <id>Q12893</id>
        <label>TMEM115</label>
    </interactant>
    <organismsDiffer>false</organismsDiffer>
    <experiments>3</experiments>
</comment>
<comment type="interaction">
    <interactant intactId="EBI-12937691">
        <id>Q9BUP3-3</id>
    </interactant>
    <interactant intactId="EBI-6447886">
        <id>Q9Y320</id>
        <label>TMX2</label>
    </interactant>
    <organismsDiffer>false</organismsDiffer>
    <experiments>3</experiments>
</comment>
<comment type="subcellular location">
    <subcellularLocation>
        <location evidence="6">Cytoplasm</location>
    </subcellularLocation>
</comment>
<comment type="alternative products">
    <event type="alternative splicing"/>
    <isoform>
        <id>Q9BUP3-1</id>
        <name evidence="12">1</name>
        <name evidence="17">CC3</name>
        <sequence type="displayed"/>
    </isoform>
    <isoform>
        <id>Q9BUP3-2</id>
        <name evidence="2 20">2</name>
        <name evidence="14">TC3</name>
        <sequence type="described" ref="VSP_051864 VSP_051865"/>
    </isoform>
    <isoform>
        <id>Q9BUP3-3</id>
        <name>3</name>
        <sequence type="described" ref="VSP_038339"/>
    </isoform>
</comment>
<comment type="tissue specificity">
    <text evidence="4 11 12">High levels in liver, lung, skeletal muscle, pancreas and placenta (PubMed:9174052). Moderate levels in heart and kidney (PubMed:9174052). Low levels in brain (PubMed:9174052). Not expressed or low levels in variant small cell lung carcinomas, 33% of hepatocellular carcinomas and neuroblastomas (PubMed:14695192). Levels are reduced in the heart of patients with hypertrophic cardiomyopathy and failing hearts (PubMed:31468715).</text>
</comment>
<comment type="domain">
    <text evidence="2">Unique C-terminus confers high proteasome-dependent instability to isoform 2.</text>
</comment>
<comment type="miscellaneous">
    <molecule>Isoform 2</molecule>
    <text evidence="20">Mutagenesis of Leu-154 and Leu-157 or Cys-158, Cys-160 and Cys-161 abolishes antiapoptotic effect.</text>
</comment>
<comment type="caution">
    <text evidence="20">Was originally (PubMed:9482853, PubMed:10698937) thought to be a transcriptional coregulator with protein kinase activity. However, crystal structure reveals a short chain dehydrogenase/reductase fold binding NADPH rather than ATP.</text>
</comment>
<comment type="online information" name="Atlas of Genetics and Cytogenetics in Oncology and Haematology">
    <link uri="https://atlasgeneticsoncology.org/gene/40894/HTATIP2"/>
</comment>